<organism>
    <name type="scientific">Xenopus tropicalis</name>
    <name type="common">Western clawed frog</name>
    <name type="synonym">Silurana tropicalis</name>
    <dbReference type="NCBI Taxonomy" id="8364"/>
    <lineage>
        <taxon>Eukaryota</taxon>
        <taxon>Metazoa</taxon>
        <taxon>Chordata</taxon>
        <taxon>Craniata</taxon>
        <taxon>Vertebrata</taxon>
        <taxon>Euteleostomi</taxon>
        <taxon>Amphibia</taxon>
        <taxon>Batrachia</taxon>
        <taxon>Anura</taxon>
        <taxon>Pipoidea</taxon>
        <taxon>Pipidae</taxon>
        <taxon>Xenopodinae</taxon>
        <taxon>Xenopus</taxon>
        <taxon>Silurana</taxon>
    </lineage>
</organism>
<sequence length="274" mass="31018">MHLLRTLLLRSNTSNISLLTKCAFRACPLQKWPVSLRSGCQVSVLPTQQKKWLHSQPKQQDSSTKTPVHDLPSGSQHQSEESSPSAKSSISTDTSIVAETDPLQDQSIGLLKRFKKTFKQHGKVLIPVHLVTSSFWFGSFYYAAMKGVNVVPFLEFIGLPDVIVNILKNSQGGNALTAYAMYKIATPARYTVTLGGTSLSVKYLRKYGYLSTPPLVKDYFQDRMEETKELFTEKMEETRDIISGKMEETKDRISEKLQETKDRVAFRKKKNEEM</sequence>
<keyword id="KW-0175">Coiled coil</keyword>
<keyword id="KW-0963">Cytoplasm</keyword>
<keyword id="KW-0472">Membrane</keyword>
<keyword id="KW-0496">Mitochondrion</keyword>
<keyword id="KW-1185">Reference proteome</keyword>
<keyword id="KW-0812">Transmembrane</keyword>
<keyword id="KW-1133">Transmembrane helix</keyword>
<comment type="function">
    <text evidence="1">May play a role in the structure and strength of both muscle and bone.</text>
</comment>
<comment type="subcellular location">
    <subcellularLocation>
        <location evidence="2">Membrane</location>
        <topology evidence="2">Single-pass membrane protein</topology>
    </subcellularLocation>
    <subcellularLocation>
        <location evidence="1">Mitochondrion</location>
    </subcellularLocation>
    <subcellularLocation>
        <location evidence="1">Cytoplasm</location>
    </subcellularLocation>
</comment>
<comment type="similarity">
    <text evidence="4">Belongs to the FAM210 family.</text>
</comment>
<evidence type="ECO:0000250" key="1">
    <source>
        <dbReference type="UniProtKB" id="Q8BGY7"/>
    </source>
</evidence>
<evidence type="ECO:0000255" key="2"/>
<evidence type="ECO:0000256" key="3">
    <source>
        <dbReference type="SAM" id="MobiDB-lite"/>
    </source>
</evidence>
<evidence type="ECO:0000305" key="4"/>
<feature type="chain" id="PRO_0000294125" description="Protein FAM210A">
    <location>
        <begin position="1"/>
        <end position="274"/>
    </location>
</feature>
<feature type="transmembrane region" description="Helical" evidence="2">
    <location>
        <begin position="124"/>
        <end position="144"/>
    </location>
</feature>
<feature type="domain" description="DUF1279">
    <location>
        <begin position="105"/>
        <end position="217"/>
    </location>
</feature>
<feature type="region of interest" description="Disordered" evidence="3">
    <location>
        <begin position="51"/>
        <end position="91"/>
    </location>
</feature>
<feature type="coiled-coil region" evidence="2">
    <location>
        <begin position="221"/>
        <end position="274"/>
    </location>
</feature>
<feature type="compositionally biased region" description="Polar residues" evidence="3">
    <location>
        <begin position="51"/>
        <end position="66"/>
    </location>
</feature>
<feature type="compositionally biased region" description="Low complexity" evidence="3">
    <location>
        <begin position="81"/>
        <end position="91"/>
    </location>
</feature>
<accession>A4IJ20</accession>
<protein>
    <recommendedName>
        <fullName>Protein FAM210A</fullName>
    </recommendedName>
</protein>
<proteinExistence type="evidence at transcript level"/>
<dbReference type="EMBL" id="BC136245">
    <property type="protein sequence ID" value="AAI36246.1"/>
    <property type="molecule type" value="mRNA"/>
</dbReference>
<dbReference type="RefSeq" id="NP_001096481.1">
    <property type="nucleotide sequence ID" value="NM_001103011.1"/>
</dbReference>
<dbReference type="RefSeq" id="XP_012819661.1">
    <property type="nucleotide sequence ID" value="XM_012964207.3"/>
</dbReference>
<dbReference type="RefSeq" id="XP_012819662.1">
    <property type="nucleotide sequence ID" value="XM_012964208.3"/>
</dbReference>
<dbReference type="SMR" id="A4IJ20"/>
<dbReference type="FunCoup" id="A4IJ20">
    <property type="interactions" value="1336"/>
</dbReference>
<dbReference type="STRING" id="8364.ENSXETP00000018430"/>
<dbReference type="PaxDb" id="8364-ENSXETP00000032238"/>
<dbReference type="DNASU" id="100125103"/>
<dbReference type="GeneID" id="100125103"/>
<dbReference type="KEGG" id="xtr:100125103"/>
<dbReference type="AGR" id="Xenbase:XB-GENE-944382"/>
<dbReference type="CTD" id="125228"/>
<dbReference type="Xenbase" id="XB-GENE-944382">
    <property type="gene designation" value="fam210a"/>
</dbReference>
<dbReference type="eggNOG" id="KOG4082">
    <property type="taxonomic scope" value="Eukaryota"/>
</dbReference>
<dbReference type="HOGENOM" id="CLU_085747_0_0_1"/>
<dbReference type="InParanoid" id="A4IJ20"/>
<dbReference type="OMA" id="HTWAVRE"/>
<dbReference type="OrthoDB" id="5874039at2759"/>
<dbReference type="PhylomeDB" id="A4IJ20"/>
<dbReference type="TreeFam" id="TF313283"/>
<dbReference type="Proteomes" id="UP000008143">
    <property type="component" value="Chromosome 6"/>
</dbReference>
<dbReference type="Bgee" id="ENSXETG00000014708">
    <property type="expression patterns" value="Expressed in testis and 13 other cell types or tissues"/>
</dbReference>
<dbReference type="GO" id="GO:0005737">
    <property type="term" value="C:cytoplasm"/>
    <property type="evidence" value="ECO:0000250"/>
    <property type="project" value="UniProtKB"/>
</dbReference>
<dbReference type="GO" id="GO:0016020">
    <property type="term" value="C:membrane"/>
    <property type="evidence" value="ECO:0007669"/>
    <property type="project" value="UniProtKB-SubCell"/>
</dbReference>
<dbReference type="GO" id="GO:0005739">
    <property type="term" value="C:mitochondrion"/>
    <property type="evidence" value="ECO:0000250"/>
    <property type="project" value="UniProtKB"/>
</dbReference>
<dbReference type="Gene3D" id="6.10.140.1430">
    <property type="match status" value="1"/>
</dbReference>
<dbReference type="InterPro" id="IPR045866">
    <property type="entry name" value="FAM210A/B-like"/>
</dbReference>
<dbReference type="InterPro" id="IPR009688">
    <property type="entry name" value="FAM210A/B-like_dom"/>
</dbReference>
<dbReference type="PANTHER" id="PTHR21377:SF1">
    <property type="entry name" value="PROTEIN FAM210A"/>
    <property type="match status" value="1"/>
</dbReference>
<dbReference type="PANTHER" id="PTHR21377">
    <property type="entry name" value="PROTEIN FAM210B, MITOCHONDRIAL"/>
    <property type="match status" value="1"/>
</dbReference>
<dbReference type="Pfam" id="PF06916">
    <property type="entry name" value="FAM210A-B_dom"/>
    <property type="match status" value="1"/>
</dbReference>
<gene>
    <name type="primary">fam210a</name>
</gene>
<reference key="1">
    <citation type="submission" date="2007-03" db="EMBL/GenBank/DDBJ databases">
        <authorList>
            <consortium name="NIH - Xenopus Gene Collection (XGC) project"/>
        </authorList>
    </citation>
    <scope>NUCLEOTIDE SEQUENCE [LARGE SCALE MRNA]</scope>
    <source>
        <tissue>Brain</tissue>
    </source>
</reference>
<name>F210A_XENTR</name>